<sequence>MVSLSVLLRGGLVLYGRDYKLTRADVLIEGDKIVEVKRNINKPADEVLDVSKSLVIPSFINAHTHSPMVILRGLAEDVPLMEWLQEYIWPVERKLRRKDVYWGSKLALIEMAHSGTSTFVDMYFHMEEIAKATEEVGLRAYLGYGMVDLDDEEKRKIEMRETEKLYEFIKKLDSSKVNFILAPHAPYTCSFDCLRWVSEKSREWNSLVTIHLAETQDEIKIIREKYGKSPVDVLEDVGLLNEKLIAAHGIWLSDEDIRKISSAGATIAHCPASNMKLGSGVFPMKKALENNVNVALGTDGAASNNTLDILREMRLASLLQKVIHRDPSIVKSEDIFRMATLNGAKALGLKAGVIAEGYLADIAVIDLRKAHLLPVNSPLASIIFSARGGDVDTLIVGGEIVMLDSELLTVDEEKVIDKFLEVSVA</sequence>
<dbReference type="EC" id="3.5.4.28" evidence="1"/>
<dbReference type="EC" id="3.5.4.31" evidence="1"/>
<dbReference type="EMBL" id="AJ248285">
    <property type="protein sequence ID" value="CAB49567.1"/>
    <property type="molecule type" value="Genomic_DNA"/>
</dbReference>
<dbReference type="EMBL" id="HE613800">
    <property type="protein sequence ID" value="CCE70039.1"/>
    <property type="molecule type" value="Genomic_DNA"/>
</dbReference>
<dbReference type="PIR" id="F75106">
    <property type="entry name" value="F75106"/>
</dbReference>
<dbReference type="SMR" id="Q9V0Y5"/>
<dbReference type="STRING" id="272844.PAB0443"/>
<dbReference type="KEGG" id="pab:PAB0443"/>
<dbReference type="PATRIC" id="fig|272844.11.peg.685"/>
<dbReference type="eggNOG" id="arCOG00695">
    <property type="taxonomic scope" value="Archaea"/>
</dbReference>
<dbReference type="HOGENOM" id="CLU_012358_2_1_2"/>
<dbReference type="PhylomeDB" id="Q9V0Y5"/>
<dbReference type="Proteomes" id="UP000000810">
    <property type="component" value="Chromosome"/>
</dbReference>
<dbReference type="Proteomes" id="UP000009139">
    <property type="component" value="Chromosome"/>
</dbReference>
<dbReference type="GO" id="GO:0090614">
    <property type="term" value="F:5'-methylthioadenosine deaminase activity"/>
    <property type="evidence" value="ECO:0007669"/>
    <property type="project" value="UniProtKB-UniRule"/>
</dbReference>
<dbReference type="GO" id="GO:0046872">
    <property type="term" value="F:metal ion binding"/>
    <property type="evidence" value="ECO:0007669"/>
    <property type="project" value="UniProtKB-KW"/>
</dbReference>
<dbReference type="GO" id="GO:0050270">
    <property type="term" value="F:S-adenosylhomocysteine deaminase activity"/>
    <property type="evidence" value="ECO:0007669"/>
    <property type="project" value="UniProtKB-UniRule"/>
</dbReference>
<dbReference type="CDD" id="cd01298">
    <property type="entry name" value="ATZ_TRZ_like"/>
    <property type="match status" value="1"/>
</dbReference>
<dbReference type="FunFam" id="3.20.20.140:FF:000014">
    <property type="entry name" value="5-methylthioadenosine/S-adenosylhomocysteine deaminase"/>
    <property type="match status" value="1"/>
</dbReference>
<dbReference type="Gene3D" id="3.20.20.140">
    <property type="entry name" value="Metal-dependent hydrolases"/>
    <property type="match status" value="1"/>
</dbReference>
<dbReference type="Gene3D" id="2.30.40.10">
    <property type="entry name" value="Urease, subunit C, domain 1"/>
    <property type="match status" value="1"/>
</dbReference>
<dbReference type="HAMAP" id="MF_01281">
    <property type="entry name" value="MTA_SAH_deamin"/>
    <property type="match status" value="1"/>
</dbReference>
<dbReference type="InterPro" id="IPR006680">
    <property type="entry name" value="Amidohydro-rel"/>
</dbReference>
<dbReference type="InterPro" id="IPR023512">
    <property type="entry name" value="Deaminase_MtaD/DadD"/>
</dbReference>
<dbReference type="InterPro" id="IPR011059">
    <property type="entry name" value="Metal-dep_hydrolase_composite"/>
</dbReference>
<dbReference type="InterPro" id="IPR032466">
    <property type="entry name" value="Metal_Hydrolase"/>
</dbReference>
<dbReference type="InterPro" id="IPR050287">
    <property type="entry name" value="MTA/SAH_deaminase"/>
</dbReference>
<dbReference type="NCBIfam" id="NF006252">
    <property type="entry name" value="PRK08393.1"/>
    <property type="match status" value="1"/>
</dbReference>
<dbReference type="PANTHER" id="PTHR43794:SF11">
    <property type="entry name" value="AMIDOHYDROLASE-RELATED DOMAIN-CONTAINING PROTEIN"/>
    <property type="match status" value="1"/>
</dbReference>
<dbReference type="PANTHER" id="PTHR43794">
    <property type="entry name" value="AMINOHYDROLASE SSNA-RELATED"/>
    <property type="match status" value="1"/>
</dbReference>
<dbReference type="Pfam" id="PF01979">
    <property type="entry name" value="Amidohydro_1"/>
    <property type="match status" value="1"/>
</dbReference>
<dbReference type="SUPFAM" id="SSF51338">
    <property type="entry name" value="Composite domain of metallo-dependent hydrolases"/>
    <property type="match status" value="1"/>
</dbReference>
<dbReference type="SUPFAM" id="SSF51556">
    <property type="entry name" value="Metallo-dependent hydrolases"/>
    <property type="match status" value="1"/>
</dbReference>
<feature type="chain" id="PRO_0000312485" description="5-methylthioadenosine/S-adenosylhomocysteine deaminase">
    <location>
        <begin position="1"/>
        <end position="425"/>
    </location>
</feature>
<feature type="binding site" evidence="1">
    <location>
        <position position="63"/>
    </location>
    <ligand>
        <name>Zn(2+)</name>
        <dbReference type="ChEBI" id="CHEBI:29105"/>
    </ligand>
</feature>
<feature type="binding site" evidence="1">
    <location>
        <position position="65"/>
    </location>
    <ligand>
        <name>Zn(2+)</name>
        <dbReference type="ChEBI" id="CHEBI:29105"/>
    </ligand>
</feature>
<feature type="binding site" evidence="1">
    <location>
        <position position="92"/>
    </location>
    <ligand>
        <name>substrate</name>
    </ligand>
</feature>
<feature type="binding site" evidence="1">
    <location>
        <position position="184"/>
    </location>
    <ligand>
        <name>substrate</name>
    </ligand>
</feature>
<feature type="binding site" evidence="1">
    <location>
        <position position="211"/>
    </location>
    <ligand>
        <name>Zn(2+)</name>
        <dbReference type="ChEBI" id="CHEBI:29105"/>
    </ligand>
</feature>
<feature type="binding site" evidence="1">
    <location>
        <position position="214"/>
    </location>
    <ligand>
        <name>substrate</name>
    </ligand>
</feature>
<feature type="binding site" evidence="1">
    <location>
        <position position="299"/>
    </location>
    <ligand>
        <name>substrate</name>
    </ligand>
</feature>
<feature type="binding site" evidence="1">
    <location>
        <position position="299"/>
    </location>
    <ligand>
        <name>Zn(2+)</name>
        <dbReference type="ChEBI" id="CHEBI:29105"/>
    </ligand>
</feature>
<protein>
    <recommendedName>
        <fullName evidence="1">5-methylthioadenosine/S-adenosylhomocysteine deaminase</fullName>
        <shortName evidence="1">MTA/SAH deaminase</shortName>
        <ecNumber evidence="1">3.5.4.28</ecNumber>
        <ecNumber evidence="1">3.5.4.31</ecNumber>
    </recommendedName>
</protein>
<comment type="function">
    <text evidence="1">Catalyzes the deamination of 5-methylthioadenosine and S-adenosyl-L-homocysteine into 5-methylthioinosine and S-inosyl-L-homocysteine, respectively. Is also able to deaminate adenosine.</text>
</comment>
<comment type="catalytic activity">
    <reaction evidence="1">
        <text>S-adenosyl-L-homocysteine + H2O + H(+) = S-inosyl-L-homocysteine + NH4(+)</text>
        <dbReference type="Rhea" id="RHEA:20716"/>
        <dbReference type="ChEBI" id="CHEBI:15377"/>
        <dbReference type="ChEBI" id="CHEBI:15378"/>
        <dbReference type="ChEBI" id="CHEBI:28938"/>
        <dbReference type="ChEBI" id="CHEBI:57856"/>
        <dbReference type="ChEBI" id="CHEBI:57985"/>
        <dbReference type="EC" id="3.5.4.28"/>
    </reaction>
</comment>
<comment type="catalytic activity">
    <reaction evidence="1">
        <text>S-methyl-5'-thioadenosine + H2O + H(+) = S-methyl-5'-thioinosine + NH4(+)</text>
        <dbReference type="Rhea" id="RHEA:25025"/>
        <dbReference type="ChEBI" id="CHEBI:15377"/>
        <dbReference type="ChEBI" id="CHEBI:15378"/>
        <dbReference type="ChEBI" id="CHEBI:17509"/>
        <dbReference type="ChEBI" id="CHEBI:28938"/>
        <dbReference type="ChEBI" id="CHEBI:48595"/>
        <dbReference type="EC" id="3.5.4.31"/>
    </reaction>
</comment>
<comment type="cofactor">
    <cofactor evidence="1">
        <name>Zn(2+)</name>
        <dbReference type="ChEBI" id="CHEBI:29105"/>
    </cofactor>
    <text evidence="1">Binds 1 zinc ion per subunit.</text>
</comment>
<comment type="similarity">
    <text evidence="1">Belongs to the metallo-dependent hydrolases superfamily. MTA/SAH deaminase family.</text>
</comment>
<reference key="1">
    <citation type="journal article" date="2003" name="Mol. Microbiol.">
        <title>An integrated analysis of the genome of the hyperthermophilic archaeon Pyrococcus abyssi.</title>
        <authorList>
            <person name="Cohen G.N."/>
            <person name="Barbe V."/>
            <person name="Flament D."/>
            <person name="Galperin M."/>
            <person name="Heilig R."/>
            <person name="Lecompte O."/>
            <person name="Poch O."/>
            <person name="Prieur D."/>
            <person name="Querellou J."/>
            <person name="Ripp R."/>
            <person name="Thierry J.-C."/>
            <person name="Van der Oost J."/>
            <person name="Weissenbach J."/>
            <person name="Zivanovic Y."/>
            <person name="Forterre P."/>
        </authorList>
    </citation>
    <scope>NUCLEOTIDE SEQUENCE [LARGE SCALE GENOMIC DNA]</scope>
    <source>
        <strain>GE5 / Orsay</strain>
    </source>
</reference>
<reference key="2">
    <citation type="journal article" date="2012" name="Curr. Microbiol.">
        <title>Re-annotation of two hyperthermophilic archaea Pyrococcus abyssi GE5 and Pyrococcus furiosus DSM 3638.</title>
        <authorList>
            <person name="Gao J."/>
            <person name="Wang J."/>
        </authorList>
    </citation>
    <scope>GENOME REANNOTATION</scope>
    <source>
        <strain>GE5 / Orsay</strain>
    </source>
</reference>
<proteinExistence type="inferred from homology"/>
<evidence type="ECO:0000255" key="1">
    <source>
        <dbReference type="HAMAP-Rule" id="MF_01281"/>
    </source>
</evidence>
<gene>
    <name evidence="1" type="primary">mtaD</name>
    <name type="ordered locus">PYRAB06540</name>
    <name type="ORF">PAB0443</name>
</gene>
<accession>Q9V0Y5</accession>
<accession>G8ZJB2</accession>
<name>MTAD_PYRAB</name>
<keyword id="KW-0378">Hydrolase</keyword>
<keyword id="KW-0479">Metal-binding</keyword>
<keyword id="KW-0862">Zinc</keyword>
<organism>
    <name type="scientific">Pyrococcus abyssi (strain GE5 / Orsay)</name>
    <dbReference type="NCBI Taxonomy" id="272844"/>
    <lineage>
        <taxon>Archaea</taxon>
        <taxon>Methanobacteriati</taxon>
        <taxon>Methanobacteriota</taxon>
        <taxon>Thermococci</taxon>
        <taxon>Thermococcales</taxon>
        <taxon>Thermococcaceae</taxon>
        <taxon>Pyrococcus</taxon>
    </lineage>
</organism>